<name>THIE_PYRAB</name>
<evidence type="ECO:0000255" key="1">
    <source>
        <dbReference type="HAMAP-Rule" id="MF_00097"/>
    </source>
</evidence>
<keyword id="KW-0460">Magnesium</keyword>
<keyword id="KW-0479">Metal-binding</keyword>
<keyword id="KW-0784">Thiamine biosynthesis</keyword>
<keyword id="KW-0808">Transferase</keyword>
<gene>
    <name evidence="1" type="primary">thiE</name>
    <name type="ordered locus">PYRAB10900</name>
    <name type="ORF">PAB1645</name>
</gene>
<organism>
    <name type="scientific">Pyrococcus abyssi (strain GE5 / Orsay)</name>
    <dbReference type="NCBI Taxonomy" id="272844"/>
    <lineage>
        <taxon>Archaea</taxon>
        <taxon>Methanobacteriati</taxon>
        <taxon>Methanobacteriota</taxon>
        <taxon>Thermococci</taxon>
        <taxon>Thermococcales</taxon>
        <taxon>Thermococcaceae</taxon>
        <taxon>Pyrococcus</taxon>
    </lineage>
</organism>
<dbReference type="EC" id="2.5.1.3" evidence="1"/>
<dbReference type="EMBL" id="AJ248286">
    <property type="protein sequence ID" value="CAB50001.1"/>
    <property type="molecule type" value="Genomic_DNA"/>
</dbReference>
<dbReference type="EMBL" id="HE613800">
    <property type="protein sequence ID" value="CCE70503.1"/>
    <property type="molecule type" value="Genomic_DNA"/>
</dbReference>
<dbReference type="PIR" id="D75087">
    <property type="entry name" value="D75087"/>
</dbReference>
<dbReference type="RefSeq" id="WP_010868208.1">
    <property type="nucleotide sequence ID" value="NC_000868.1"/>
</dbReference>
<dbReference type="SMR" id="Q9UZQ5"/>
<dbReference type="STRING" id="272844.PAB1645"/>
<dbReference type="KEGG" id="pab:PAB1645"/>
<dbReference type="PATRIC" id="fig|272844.11.peg.1146"/>
<dbReference type="eggNOG" id="arCOG01089">
    <property type="taxonomic scope" value="Archaea"/>
</dbReference>
<dbReference type="HOGENOM" id="CLU_018272_3_2_2"/>
<dbReference type="OrthoDB" id="85572at2157"/>
<dbReference type="PhylomeDB" id="Q9UZQ5"/>
<dbReference type="UniPathway" id="UPA00060">
    <property type="reaction ID" value="UER00141"/>
</dbReference>
<dbReference type="Proteomes" id="UP000000810">
    <property type="component" value="Chromosome"/>
</dbReference>
<dbReference type="Proteomes" id="UP000009139">
    <property type="component" value="Chromosome"/>
</dbReference>
<dbReference type="GO" id="GO:0005737">
    <property type="term" value="C:cytoplasm"/>
    <property type="evidence" value="ECO:0007669"/>
    <property type="project" value="TreeGrafter"/>
</dbReference>
<dbReference type="GO" id="GO:0000287">
    <property type="term" value="F:magnesium ion binding"/>
    <property type="evidence" value="ECO:0007669"/>
    <property type="project" value="UniProtKB-UniRule"/>
</dbReference>
<dbReference type="GO" id="GO:0004789">
    <property type="term" value="F:thiamine-phosphate diphosphorylase activity"/>
    <property type="evidence" value="ECO:0007669"/>
    <property type="project" value="UniProtKB-UniRule"/>
</dbReference>
<dbReference type="GO" id="GO:0009228">
    <property type="term" value="P:thiamine biosynthetic process"/>
    <property type="evidence" value="ECO:0007669"/>
    <property type="project" value="UniProtKB-KW"/>
</dbReference>
<dbReference type="GO" id="GO:0009229">
    <property type="term" value="P:thiamine diphosphate biosynthetic process"/>
    <property type="evidence" value="ECO:0007669"/>
    <property type="project" value="UniProtKB-UniRule"/>
</dbReference>
<dbReference type="CDD" id="cd00564">
    <property type="entry name" value="TMP_TenI"/>
    <property type="match status" value="1"/>
</dbReference>
<dbReference type="FunFam" id="3.20.20.70:FF:000096">
    <property type="entry name" value="Thiamine-phosphate synthase"/>
    <property type="match status" value="1"/>
</dbReference>
<dbReference type="Gene3D" id="3.20.20.70">
    <property type="entry name" value="Aldolase class I"/>
    <property type="match status" value="1"/>
</dbReference>
<dbReference type="HAMAP" id="MF_00097">
    <property type="entry name" value="TMP_synthase"/>
    <property type="match status" value="1"/>
</dbReference>
<dbReference type="InterPro" id="IPR013785">
    <property type="entry name" value="Aldolase_TIM"/>
</dbReference>
<dbReference type="InterPro" id="IPR036206">
    <property type="entry name" value="ThiamineP_synth_sf"/>
</dbReference>
<dbReference type="InterPro" id="IPR022998">
    <property type="entry name" value="ThiamineP_synth_TenI"/>
</dbReference>
<dbReference type="InterPro" id="IPR034291">
    <property type="entry name" value="TMP_synthase"/>
</dbReference>
<dbReference type="NCBIfam" id="TIGR00693">
    <property type="entry name" value="thiE"/>
    <property type="match status" value="1"/>
</dbReference>
<dbReference type="PANTHER" id="PTHR20857:SF23">
    <property type="entry name" value="THIAMINE BIOSYNTHETIC BIFUNCTIONAL ENZYME"/>
    <property type="match status" value="1"/>
</dbReference>
<dbReference type="PANTHER" id="PTHR20857">
    <property type="entry name" value="THIAMINE-PHOSPHATE PYROPHOSPHORYLASE"/>
    <property type="match status" value="1"/>
</dbReference>
<dbReference type="Pfam" id="PF02581">
    <property type="entry name" value="TMP-TENI"/>
    <property type="match status" value="1"/>
</dbReference>
<dbReference type="SUPFAM" id="SSF51391">
    <property type="entry name" value="Thiamin phosphate synthase"/>
    <property type="match status" value="1"/>
</dbReference>
<reference key="1">
    <citation type="journal article" date="2003" name="Mol. Microbiol.">
        <title>An integrated analysis of the genome of the hyperthermophilic archaeon Pyrococcus abyssi.</title>
        <authorList>
            <person name="Cohen G.N."/>
            <person name="Barbe V."/>
            <person name="Flament D."/>
            <person name="Galperin M."/>
            <person name="Heilig R."/>
            <person name="Lecompte O."/>
            <person name="Poch O."/>
            <person name="Prieur D."/>
            <person name="Querellou J."/>
            <person name="Ripp R."/>
            <person name="Thierry J.-C."/>
            <person name="Van der Oost J."/>
            <person name="Weissenbach J."/>
            <person name="Zivanovic Y."/>
            <person name="Forterre P."/>
        </authorList>
    </citation>
    <scope>NUCLEOTIDE SEQUENCE [LARGE SCALE GENOMIC DNA]</scope>
    <source>
        <strain>GE5 / Orsay</strain>
    </source>
</reference>
<reference key="2">
    <citation type="journal article" date="2012" name="Curr. Microbiol.">
        <title>Re-annotation of two hyperthermophilic archaea Pyrococcus abyssi GE5 and Pyrococcus furiosus DSM 3638.</title>
        <authorList>
            <person name="Gao J."/>
            <person name="Wang J."/>
        </authorList>
    </citation>
    <scope>GENOME REANNOTATION</scope>
    <source>
        <strain>GE5 / Orsay</strain>
    </source>
</reference>
<comment type="function">
    <text evidence="1">Condenses 4-methyl-5-(beta-hydroxyethyl)thiazole monophosphate (THZ-P) and 2-methyl-4-amino-5-hydroxymethyl pyrimidine pyrophosphate (HMP-PP) to form thiamine monophosphate (TMP).</text>
</comment>
<comment type="catalytic activity">
    <reaction evidence="1">
        <text>2-[(2R,5Z)-2-carboxy-4-methylthiazol-5(2H)-ylidene]ethyl phosphate + 4-amino-2-methyl-5-(diphosphooxymethyl)pyrimidine + 2 H(+) = thiamine phosphate + CO2 + diphosphate</text>
        <dbReference type="Rhea" id="RHEA:47844"/>
        <dbReference type="ChEBI" id="CHEBI:15378"/>
        <dbReference type="ChEBI" id="CHEBI:16526"/>
        <dbReference type="ChEBI" id="CHEBI:33019"/>
        <dbReference type="ChEBI" id="CHEBI:37575"/>
        <dbReference type="ChEBI" id="CHEBI:57841"/>
        <dbReference type="ChEBI" id="CHEBI:62899"/>
        <dbReference type="EC" id="2.5.1.3"/>
    </reaction>
</comment>
<comment type="catalytic activity">
    <reaction evidence="1">
        <text>2-(2-carboxy-4-methylthiazol-5-yl)ethyl phosphate + 4-amino-2-methyl-5-(diphosphooxymethyl)pyrimidine + 2 H(+) = thiamine phosphate + CO2 + diphosphate</text>
        <dbReference type="Rhea" id="RHEA:47848"/>
        <dbReference type="ChEBI" id="CHEBI:15378"/>
        <dbReference type="ChEBI" id="CHEBI:16526"/>
        <dbReference type="ChEBI" id="CHEBI:33019"/>
        <dbReference type="ChEBI" id="CHEBI:37575"/>
        <dbReference type="ChEBI" id="CHEBI:57841"/>
        <dbReference type="ChEBI" id="CHEBI:62890"/>
        <dbReference type="EC" id="2.5.1.3"/>
    </reaction>
</comment>
<comment type="catalytic activity">
    <reaction evidence="1">
        <text>4-methyl-5-(2-phosphooxyethyl)-thiazole + 4-amino-2-methyl-5-(diphosphooxymethyl)pyrimidine + H(+) = thiamine phosphate + diphosphate</text>
        <dbReference type="Rhea" id="RHEA:22328"/>
        <dbReference type="ChEBI" id="CHEBI:15378"/>
        <dbReference type="ChEBI" id="CHEBI:33019"/>
        <dbReference type="ChEBI" id="CHEBI:37575"/>
        <dbReference type="ChEBI" id="CHEBI:57841"/>
        <dbReference type="ChEBI" id="CHEBI:58296"/>
        <dbReference type="EC" id="2.5.1.3"/>
    </reaction>
</comment>
<comment type="cofactor">
    <cofactor evidence="1">
        <name>Mg(2+)</name>
        <dbReference type="ChEBI" id="CHEBI:18420"/>
    </cofactor>
    <text evidence="1">Binds 1 Mg(2+) ion per subunit.</text>
</comment>
<comment type="pathway">
    <text evidence="1">Cofactor biosynthesis; thiamine diphosphate biosynthesis; thiamine phosphate from 4-amino-2-methyl-5-diphosphomethylpyrimidine and 4-methyl-5-(2-phosphoethyl)-thiazole: step 1/1.</text>
</comment>
<comment type="similarity">
    <text evidence="1">Belongs to the thiamine-phosphate synthase family.</text>
</comment>
<accession>Q9UZQ5</accession>
<accession>G8ZJP4</accession>
<protein>
    <recommendedName>
        <fullName evidence="1">Thiamine-phosphate synthase</fullName>
        <shortName evidence="1">TP synthase</shortName>
        <shortName evidence="1">TPS</shortName>
        <ecNumber evidence="1">2.5.1.3</ecNumber>
    </recommendedName>
    <alternativeName>
        <fullName evidence="1">Thiamine-phosphate pyrophosphorylase</fullName>
        <shortName evidence="1">TMP pyrophosphorylase</shortName>
        <shortName evidence="1">TMP-PPase</shortName>
    </alternativeName>
</protein>
<proteinExistence type="inferred from homology"/>
<sequence>MGFREKLKLYVITDRRLKPEVKSVRQALEGGATSIQLRIKDASTKEMYEVGKEIRRLTQEYDALFFVDDRIDVALAVNADGVQLGPEDMPIEVAREIAPNLIIGASVYSLEEALEAEKKGADYLGAGSVFPTKTKRDVRVIRIEGLREIVEAVSIPVVAIGGINVENVKQVLSAGVDGIAVVSAVMGASDVKKATEELRKIIEEVLG</sequence>
<feature type="chain" id="PRO_0000157073" description="Thiamine-phosphate synthase">
    <location>
        <begin position="1"/>
        <end position="207"/>
    </location>
</feature>
<feature type="binding site" evidence="1">
    <location>
        <begin position="36"/>
        <end position="40"/>
    </location>
    <ligand>
        <name>4-amino-2-methyl-5-(diphosphooxymethyl)pyrimidine</name>
        <dbReference type="ChEBI" id="CHEBI:57841"/>
    </ligand>
</feature>
<feature type="binding site" evidence="1">
    <location>
        <position position="68"/>
    </location>
    <ligand>
        <name>4-amino-2-methyl-5-(diphosphooxymethyl)pyrimidine</name>
        <dbReference type="ChEBI" id="CHEBI:57841"/>
    </ligand>
</feature>
<feature type="binding site" evidence="1">
    <location>
        <position position="69"/>
    </location>
    <ligand>
        <name>Mg(2+)</name>
        <dbReference type="ChEBI" id="CHEBI:18420"/>
    </ligand>
</feature>
<feature type="binding site" evidence="1">
    <location>
        <position position="88"/>
    </location>
    <ligand>
        <name>Mg(2+)</name>
        <dbReference type="ChEBI" id="CHEBI:18420"/>
    </ligand>
</feature>
<feature type="binding site" evidence="1">
    <location>
        <position position="106"/>
    </location>
    <ligand>
        <name>4-amino-2-methyl-5-(diphosphooxymethyl)pyrimidine</name>
        <dbReference type="ChEBI" id="CHEBI:57841"/>
    </ligand>
</feature>
<feature type="binding site" evidence="1">
    <location>
        <begin position="132"/>
        <end position="134"/>
    </location>
    <ligand>
        <name>2-[(2R,5Z)-2-carboxy-4-methylthiazol-5(2H)-ylidene]ethyl phosphate</name>
        <dbReference type="ChEBI" id="CHEBI:62899"/>
    </ligand>
</feature>
<feature type="binding site" evidence="1">
    <location>
        <position position="135"/>
    </location>
    <ligand>
        <name>4-amino-2-methyl-5-(diphosphooxymethyl)pyrimidine</name>
        <dbReference type="ChEBI" id="CHEBI:57841"/>
    </ligand>
</feature>
<feature type="binding site" evidence="1">
    <location>
        <position position="162"/>
    </location>
    <ligand>
        <name>2-[(2R,5Z)-2-carboxy-4-methylthiazol-5(2H)-ylidene]ethyl phosphate</name>
        <dbReference type="ChEBI" id="CHEBI:62899"/>
    </ligand>
</feature>
<feature type="binding site" evidence="1">
    <location>
        <begin position="182"/>
        <end position="183"/>
    </location>
    <ligand>
        <name>2-[(2R,5Z)-2-carboxy-4-methylthiazol-5(2H)-ylidene]ethyl phosphate</name>
        <dbReference type="ChEBI" id="CHEBI:62899"/>
    </ligand>
</feature>